<evidence type="ECO:0000255" key="1"/>
<evidence type="ECO:0000255" key="2">
    <source>
        <dbReference type="PROSITE-ProRule" id="PRU00102"/>
    </source>
</evidence>
<evidence type="ECO:0000255" key="3">
    <source>
        <dbReference type="PROSITE-ProRule" id="PRU00284"/>
    </source>
</evidence>
<evidence type="ECO:0000269" key="4">
    <source>
    </source>
</evidence>
<evidence type="ECO:0000269" key="5">
    <source>
    </source>
</evidence>
<evidence type="ECO:0000269" key="6">
    <source>
    </source>
</evidence>
<evidence type="ECO:0000303" key="7">
    <source>
    </source>
</evidence>
<evidence type="ECO:0000305" key="8"/>
<evidence type="ECO:0000305" key="9">
    <source>
    </source>
</evidence>
<accession>Q9HUW6</accession>
<accession>Q9KWF1</accession>
<sequence>MRLKQLTNLNTLLLLTVCLALGITLWWSQRAMERPFQLLDQYLELSQRFDEQVARNIRQYLGSGDAVRQQAALQALESLAEALPELPPDLARTLAPSLAELREFSAGDLLAAGKLAGDPQGLLLQAERDLTGNLEQWSAYLDAAAGQPQAGAYRTPLLLASLHLTRLSLARAKLVESANPALAGDVERELANLREQAGRIEALPLLGVLDEQRSASDDFAAMMGLAGDAEAGAGNAEDRGVALRRELASLLQRYPDELRRTRDLIERRQQLSADTGARLDAVRQALATLEPQVRGERQRLQGQVRLIQGGMIALILLIALAIDSLQRRLARVLGQLVPALSAWADGDFSRPISLRTRTEDLRNLEDSLNRLRSFLAELVGAIHRRAEQVAGSSQTLAEVSSGLHAGVERQAGDTGQIRDALGDMEAAIQQVAGDASQTADASRSAGQAVEHGQRVIGESLGGLRELVDEVQGNAQSIERLAEESATIGSVLTVIRSIAEQTNLLALNAAIEAARAGDQGRGFAVVAEEVRSLAQRTAGATEEIQQLIGRLQQAARQSVEAMRSQVEHAERTAEQAGAAEGALDEVVAAIHTIGVMAERIAEGSTQQSQAVGEIRSHSERIHALGGENLRLIGHSREQGEQLRQLGGDLRTTVQAFRL</sequence>
<dbReference type="EMBL" id="AB039333">
    <property type="protein sequence ID" value="BAA96489.1"/>
    <property type="status" value="ALT_FRAME"/>
    <property type="molecule type" value="Genomic_DNA"/>
</dbReference>
<dbReference type="EMBL" id="AE004091">
    <property type="protein sequence ID" value="AAG08229.1"/>
    <property type="molecule type" value="Genomic_DNA"/>
</dbReference>
<dbReference type="PIR" id="E83041">
    <property type="entry name" value="E83041"/>
</dbReference>
<dbReference type="RefSeq" id="NP_253531.1">
    <property type="nucleotide sequence ID" value="NC_002516.2"/>
</dbReference>
<dbReference type="RefSeq" id="WP_003112328.1">
    <property type="nucleotide sequence ID" value="NZ_QZGE01000002.1"/>
</dbReference>
<dbReference type="SMR" id="Q9HUW6"/>
<dbReference type="STRING" id="208964.PA4844"/>
<dbReference type="PaxDb" id="208964-PA4844"/>
<dbReference type="GeneID" id="879569"/>
<dbReference type="KEGG" id="pae:PA4844"/>
<dbReference type="PATRIC" id="fig|208964.12.peg.5076"/>
<dbReference type="PseudoCAP" id="PA4844"/>
<dbReference type="HOGENOM" id="CLU_000445_107_27_6"/>
<dbReference type="InParanoid" id="Q9HUW6"/>
<dbReference type="OrthoDB" id="7024925at2"/>
<dbReference type="PhylomeDB" id="Q9HUW6"/>
<dbReference type="BioCyc" id="PAER208964:G1FZ6-4958-MONOMER"/>
<dbReference type="Proteomes" id="UP000002438">
    <property type="component" value="Chromosome"/>
</dbReference>
<dbReference type="GO" id="GO:0005886">
    <property type="term" value="C:plasma membrane"/>
    <property type="evidence" value="ECO:0007669"/>
    <property type="project" value="UniProtKB-SubCell"/>
</dbReference>
<dbReference type="GO" id="GO:0004888">
    <property type="term" value="F:transmembrane signaling receptor activity"/>
    <property type="evidence" value="ECO:0007669"/>
    <property type="project" value="InterPro"/>
</dbReference>
<dbReference type="GO" id="GO:0006935">
    <property type="term" value="P:chemotaxis"/>
    <property type="evidence" value="ECO:0000315"/>
    <property type="project" value="PseudoCAP"/>
</dbReference>
<dbReference type="GO" id="GO:0010247">
    <property type="term" value="P:detection of phosphate ion"/>
    <property type="evidence" value="ECO:0000315"/>
    <property type="project" value="PseudoCAP"/>
</dbReference>
<dbReference type="GO" id="GO:0050918">
    <property type="term" value="P:positive chemotaxis"/>
    <property type="evidence" value="ECO:0000315"/>
    <property type="project" value="PseudoCAP"/>
</dbReference>
<dbReference type="GO" id="GO:0007165">
    <property type="term" value="P:signal transduction"/>
    <property type="evidence" value="ECO:0007669"/>
    <property type="project" value="UniProtKB-KW"/>
</dbReference>
<dbReference type="CDD" id="cd11386">
    <property type="entry name" value="MCP_signal"/>
    <property type="match status" value="1"/>
</dbReference>
<dbReference type="FunFam" id="1.10.287.950:FF:000001">
    <property type="entry name" value="Methyl-accepting chemotaxis sensory transducer"/>
    <property type="match status" value="1"/>
</dbReference>
<dbReference type="Gene3D" id="1.10.287.950">
    <property type="entry name" value="Methyl-accepting chemotaxis protein"/>
    <property type="match status" value="1"/>
</dbReference>
<dbReference type="InterPro" id="IPR004090">
    <property type="entry name" value="Chemotax_Me-accpt_rcpt"/>
</dbReference>
<dbReference type="InterPro" id="IPR003660">
    <property type="entry name" value="HAMP_dom"/>
</dbReference>
<dbReference type="InterPro" id="IPR004089">
    <property type="entry name" value="MCPsignal_dom"/>
</dbReference>
<dbReference type="PANTHER" id="PTHR32089:SF119">
    <property type="entry name" value="METHYL-ACCEPTING CHEMOTAXIS PROTEIN CTPL"/>
    <property type="match status" value="1"/>
</dbReference>
<dbReference type="PANTHER" id="PTHR32089">
    <property type="entry name" value="METHYL-ACCEPTING CHEMOTAXIS PROTEIN MCPB"/>
    <property type="match status" value="1"/>
</dbReference>
<dbReference type="Pfam" id="PF00015">
    <property type="entry name" value="MCPsignal"/>
    <property type="match status" value="1"/>
</dbReference>
<dbReference type="PRINTS" id="PR00260">
    <property type="entry name" value="CHEMTRNSDUCR"/>
</dbReference>
<dbReference type="SMART" id="SM00283">
    <property type="entry name" value="MA"/>
    <property type="match status" value="1"/>
</dbReference>
<dbReference type="SUPFAM" id="SSF58104">
    <property type="entry name" value="Methyl-accepting chemotaxis protein (MCP) signaling domain"/>
    <property type="match status" value="1"/>
</dbReference>
<dbReference type="PROSITE" id="PS50111">
    <property type="entry name" value="CHEMOTAXIS_TRANSDUC_2"/>
    <property type="match status" value="1"/>
</dbReference>
<dbReference type="PROSITE" id="PS50885">
    <property type="entry name" value="HAMP"/>
    <property type="match status" value="1"/>
</dbReference>
<feature type="chain" id="PRO_0000424879" description="Methyl-accepting chemotaxis protein CtpL">
    <location>
        <begin position="1"/>
        <end position="657"/>
    </location>
</feature>
<feature type="topological domain" description="Cytoplasmic" evidence="9">
    <location>
        <begin position="1"/>
        <end position="5"/>
    </location>
</feature>
<feature type="transmembrane region" description="Helical" evidence="1">
    <location>
        <begin position="6"/>
        <end position="26"/>
    </location>
</feature>
<feature type="topological domain" description="Periplasmic" evidence="9">
    <location>
        <begin position="27"/>
        <end position="305"/>
    </location>
</feature>
<feature type="transmembrane region" description="Helical" evidence="1">
    <location>
        <begin position="306"/>
        <end position="326"/>
    </location>
</feature>
<feature type="topological domain" description="Cytoplasmic" evidence="9">
    <location>
        <begin position="327"/>
        <end position="657"/>
    </location>
</feature>
<feature type="domain" description="HAMP" evidence="2">
    <location>
        <begin position="327"/>
        <end position="380"/>
    </location>
</feature>
<feature type="domain" description="Methyl-accepting transducer" evidence="3">
    <location>
        <begin position="385"/>
        <end position="621"/>
    </location>
</feature>
<comment type="function">
    <text evidence="4 5 6">Chemotactic-signal transducers respond to changes in the concentration of attractants and repellents in the environment, transduce a signal from the outside to the inside of the cell, and facilitate sensory adaptation through the variation of the level of methylation. Chemoreceptor for inorganic phosphate, which is required for taxis at low concentrations of phosphate. Is also responsible for the positive chemotaxis toward 4-chloroaniline (4CA) and catechol (PubMed:10852870, PubMed:24038698). Does not recognize inorganic phosphate directly, but via a complex between the periplasmic protein PstS and inorganic phosphate (PubMed:27353565).</text>
</comment>
<comment type="subcellular location">
    <subcellularLocation>
        <location evidence="9">Cell inner membrane</location>
        <topology evidence="1">Multi-pass membrane protein</topology>
    </subcellularLocation>
</comment>
<comment type="induction">
    <text evidence="4">Induced by phosphate limitation, via the PhoR/PhoB two-component regulatory system. Repressed by PhoU under conditions of phosphate excess.</text>
</comment>
<comment type="similarity">
    <text evidence="8">Belongs to the methyl-accepting chemotaxis (MCP) protein family.</text>
</comment>
<comment type="sequence caution" evidence="8">
    <conflict type="frameshift">
        <sequence resource="EMBL-CDS" id="BAA96489"/>
    </conflict>
</comment>
<name>CTPL_PSEAE</name>
<gene>
    <name evidence="7" type="primary">ctpL</name>
    <name type="ordered locus">PA4844</name>
</gene>
<proteinExistence type="evidence at protein level"/>
<keyword id="KW-0997">Cell inner membrane</keyword>
<keyword id="KW-1003">Cell membrane</keyword>
<keyword id="KW-0145">Chemotaxis</keyword>
<keyword id="KW-0472">Membrane</keyword>
<keyword id="KW-0488">Methylation</keyword>
<keyword id="KW-1185">Reference proteome</keyword>
<keyword id="KW-0807">Transducer</keyword>
<keyword id="KW-0812">Transmembrane</keyword>
<keyword id="KW-1133">Transmembrane helix</keyword>
<protein>
    <recommendedName>
        <fullName evidence="8">Methyl-accepting chemotaxis protein CtpL</fullName>
    </recommendedName>
</protein>
<organism>
    <name type="scientific">Pseudomonas aeruginosa (strain ATCC 15692 / DSM 22644 / CIP 104116 / JCM 14847 / LMG 12228 / 1C / PRS 101 / PAO1)</name>
    <dbReference type="NCBI Taxonomy" id="208964"/>
    <lineage>
        <taxon>Bacteria</taxon>
        <taxon>Pseudomonadati</taxon>
        <taxon>Pseudomonadota</taxon>
        <taxon>Gammaproteobacteria</taxon>
        <taxon>Pseudomonadales</taxon>
        <taxon>Pseudomonadaceae</taxon>
        <taxon>Pseudomonas</taxon>
    </lineage>
</organism>
<reference key="1">
    <citation type="journal article" date="2000" name="J. Bacteriol.">
        <title>Identification and characterization of two chemotactic transducers for inorganic phosphate in Pseudomonas aeruginosa.</title>
        <authorList>
            <person name="Wu H."/>
            <person name="Kato J."/>
            <person name="Kuroda A."/>
            <person name="Ikeda T."/>
            <person name="Takiguchi N."/>
            <person name="Ohtake H."/>
        </authorList>
    </citation>
    <scope>NUCLEOTIDE SEQUENCE [GENOMIC DNA]</scope>
    <scope>FUNCTION AS A CHEMORECEPTOR</scope>
    <scope>INDUCTION</scope>
    <source>
        <strain>ATCC 15692 / DSM 22644 / CIP 104116 / JCM 14847 / LMG 12228 / 1C / PRS 101 / PAO1</strain>
    </source>
</reference>
<reference key="2">
    <citation type="journal article" date="2000" name="Nature">
        <title>Complete genome sequence of Pseudomonas aeruginosa PAO1, an opportunistic pathogen.</title>
        <authorList>
            <person name="Stover C.K."/>
            <person name="Pham X.-Q.T."/>
            <person name="Erwin A.L."/>
            <person name="Mizoguchi S.D."/>
            <person name="Warrener P."/>
            <person name="Hickey M.J."/>
            <person name="Brinkman F.S.L."/>
            <person name="Hufnagle W.O."/>
            <person name="Kowalik D.J."/>
            <person name="Lagrou M."/>
            <person name="Garber R.L."/>
            <person name="Goltry L."/>
            <person name="Tolentino E."/>
            <person name="Westbrock-Wadman S."/>
            <person name="Yuan Y."/>
            <person name="Brody L.L."/>
            <person name="Coulter S.N."/>
            <person name="Folger K.R."/>
            <person name="Kas A."/>
            <person name="Larbig K."/>
            <person name="Lim R.M."/>
            <person name="Smith K.A."/>
            <person name="Spencer D.H."/>
            <person name="Wong G.K.-S."/>
            <person name="Wu Z."/>
            <person name="Paulsen I.T."/>
            <person name="Reizer J."/>
            <person name="Saier M.H. Jr."/>
            <person name="Hancock R.E.W."/>
            <person name="Lory S."/>
            <person name="Olson M.V."/>
        </authorList>
    </citation>
    <scope>NUCLEOTIDE SEQUENCE [LARGE SCALE GENOMIC DNA]</scope>
    <source>
        <strain>ATCC 15692 / DSM 22644 / CIP 104116 / JCM 14847 / LMG 12228 / 1C / PRS 101 / PAO1</strain>
    </source>
</reference>
<reference key="3">
    <citation type="journal article" date="2013" name="Appl. Environ. Microbiol.">
        <title>Identification of CtpL as a chromosomally encoded chemoreceptor for 4-chloroaniline and catechol in Pseudomonas aeruginosa PAO1.</title>
        <authorList>
            <person name="Vangnai A.S."/>
            <person name="Takeuchi K."/>
            <person name="Oku S."/>
            <person name="Kataoka N."/>
            <person name="Nitisakulkan T."/>
            <person name="Tajima T."/>
            <person name="Kato J."/>
        </authorList>
    </citation>
    <scope>FUNCTION</scope>
    <source>
        <strain>ATCC 15692 / DSM 22644 / CIP 104116 / JCM 14847 / LMG 12228 / 1C / PRS 101 / PAO1</strain>
    </source>
</reference>
<reference key="4">
    <citation type="journal article" date="2016" name="Sci. Rep.">
        <title>Two different mechanisms mediate chemotaxis to inorganic phosphate in Pseudomonas aeruginosa.</title>
        <authorList>
            <person name="Rico-Jimenez M."/>
            <person name="Reyes-Darias J.A."/>
            <person name="Ortega A."/>
            <person name="Diez Pena A.I."/>
            <person name="Morel B."/>
            <person name="Krell T."/>
        </authorList>
    </citation>
    <scope>FUNCTION</scope>
    <scope>SUBCELLULAR LOCATION</scope>
</reference>